<sequence>MARIAGVDLPRRKHVAYALPYLFGIGRTLALQICEKTNIPQNKRVEELSDAEVKAIRDLLDAEYKVEGDLRREVQLNIKRLMDLGCYRGLRHRRGLPANGQRTHTNARTRKGPRKGMLQRRPAATK</sequence>
<organism>
    <name type="scientific">Sorangium cellulosum (strain So ce56)</name>
    <name type="common">Polyangium cellulosum (strain So ce56)</name>
    <dbReference type="NCBI Taxonomy" id="448385"/>
    <lineage>
        <taxon>Bacteria</taxon>
        <taxon>Pseudomonadati</taxon>
        <taxon>Myxococcota</taxon>
        <taxon>Polyangia</taxon>
        <taxon>Polyangiales</taxon>
        <taxon>Polyangiaceae</taxon>
        <taxon>Sorangium</taxon>
    </lineage>
</organism>
<evidence type="ECO:0000255" key="1">
    <source>
        <dbReference type="HAMAP-Rule" id="MF_01315"/>
    </source>
</evidence>
<evidence type="ECO:0000256" key="2">
    <source>
        <dbReference type="SAM" id="MobiDB-lite"/>
    </source>
</evidence>
<evidence type="ECO:0000305" key="3"/>
<name>RS13_SORC5</name>
<proteinExistence type="inferred from homology"/>
<keyword id="KW-1185">Reference proteome</keyword>
<keyword id="KW-0687">Ribonucleoprotein</keyword>
<keyword id="KW-0689">Ribosomal protein</keyword>
<keyword id="KW-0694">RNA-binding</keyword>
<keyword id="KW-0699">rRNA-binding</keyword>
<keyword id="KW-0820">tRNA-binding</keyword>
<reference key="1">
    <citation type="journal article" date="2007" name="Nat. Biotechnol.">
        <title>Complete genome sequence of the myxobacterium Sorangium cellulosum.</title>
        <authorList>
            <person name="Schneiker S."/>
            <person name="Perlova O."/>
            <person name="Kaiser O."/>
            <person name="Gerth K."/>
            <person name="Alici A."/>
            <person name="Altmeyer M.O."/>
            <person name="Bartels D."/>
            <person name="Bekel T."/>
            <person name="Beyer S."/>
            <person name="Bode E."/>
            <person name="Bode H.B."/>
            <person name="Bolten C.J."/>
            <person name="Choudhuri J.V."/>
            <person name="Doss S."/>
            <person name="Elnakady Y.A."/>
            <person name="Frank B."/>
            <person name="Gaigalat L."/>
            <person name="Goesmann A."/>
            <person name="Groeger C."/>
            <person name="Gross F."/>
            <person name="Jelsbak L."/>
            <person name="Jelsbak L."/>
            <person name="Kalinowski J."/>
            <person name="Kegler C."/>
            <person name="Knauber T."/>
            <person name="Konietzny S."/>
            <person name="Kopp M."/>
            <person name="Krause L."/>
            <person name="Krug D."/>
            <person name="Linke B."/>
            <person name="Mahmud T."/>
            <person name="Martinez-Arias R."/>
            <person name="McHardy A.C."/>
            <person name="Merai M."/>
            <person name="Meyer F."/>
            <person name="Mormann S."/>
            <person name="Munoz-Dorado J."/>
            <person name="Perez J."/>
            <person name="Pradella S."/>
            <person name="Rachid S."/>
            <person name="Raddatz G."/>
            <person name="Rosenau F."/>
            <person name="Rueckert C."/>
            <person name="Sasse F."/>
            <person name="Scharfe M."/>
            <person name="Schuster S.C."/>
            <person name="Suen G."/>
            <person name="Treuner-Lange A."/>
            <person name="Velicer G.J."/>
            <person name="Vorholter F.-J."/>
            <person name="Weissman K.J."/>
            <person name="Welch R.D."/>
            <person name="Wenzel S.C."/>
            <person name="Whitworth D.E."/>
            <person name="Wilhelm S."/>
            <person name="Wittmann C."/>
            <person name="Bloecker H."/>
            <person name="Puehler A."/>
            <person name="Mueller R."/>
        </authorList>
    </citation>
    <scope>NUCLEOTIDE SEQUENCE [LARGE SCALE GENOMIC DNA]</scope>
    <source>
        <strain>So ce56</strain>
    </source>
</reference>
<dbReference type="EMBL" id="AM746676">
    <property type="protein sequence ID" value="CAN98109.1"/>
    <property type="molecule type" value="Genomic_DNA"/>
</dbReference>
<dbReference type="RefSeq" id="WP_012240548.1">
    <property type="nucleotide sequence ID" value="NC_010162.1"/>
</dbReference>
<dbReference type="SMR" id="A9FGC9"/>
<dbReference type="STRING" id="448385.sce7939"/>
<dbReference type="KEGG" id="scl:sce7939"/>
<dbReference type="eggNOG" id="COG0099">
    <property type="taxonomic scope" value="Bacteria"/>
</dbReference>
<dbReference type="HOGENOM" id="CLU_103849_1_2_7"/>
<dbReference type="OrthoDB" id="9803610at2"/>
<dbReference type="BioCyc" id="SCEL448385:SCE_RS40640-MONOMER"/>
<dbReference type="Proteomes" id="UP000002139">
    <property type="component" value="Chromosome"/>
</dbReference>
<dbReference type="GO" id="GO:0005829">
    <property type="term" value="C:cytosol"/>
    <property type="evidence" value="ECO:0007669"/>
    <property type="project" value="TreeGrafter"/>
</dbReference>
<dbReference type="GO" id="GO:0015935">
    <property type="term" value="C:small ribosomal subunit"/>
    <property type="evidence" value="ECO:0007669"/>
    <property type="project" value="TreeGrafter"/>
</dbReference>
<dbReference type="GO" id="GO:0019843">
    <property type="term" value="F:rRNA binding"/>
    <property type="evidence" value="ECO:0007669"/>
    <property type="project" value="UniProtKB-UniRule"/>
</dbReference>
<dbReference type="GO" id="GO:0003735">
    <property type="term" value="F:structural constituent of ribosome"/>
    <property type="evidence" value="ECO:0007669"/>
    <property type="project" value="InterPro"/>
</dbReference>
<dbReference type="GO" id="GO:0000049">
    <property type="term" value="F:tRNA binding"/>
    <property type="evidence" value="ECO:0007669"/>
    <property type="project" value="UniProtKB-UniRule"/>
</dbReference>
<dbReference type="GO" id="GO:0006412">
    <property type="term" value="P:translation"/>
    <property type="evidence" value="ECO:0007669"/>
    <property type="project" value="UniProtKB-UniRule"/>
</dbReference>
<dbReference type="FunFam" id="1.10.8.50:FF:000001">
    <property type="entry name" value="30S ribosomal protein S13"/>
    <property type="match status" value="1"/>
</dbReference>
<dbReference type="FunFam" id="4.10.910.10:FF:000001">
    <property type="entry name" value="30S ribosomal protein S13"/>
    <property type="match status" value="1"/>
</dbReference>
<dbReference type="Gene3D" id="1.10.8.50">
    <property type="match status" value="1"/>
</dbReference>
<dbReference type="Gene3D" id="4.10.910.10">
    <property type="entry name" value="30s ribosomal protein s13, domain 2"/>
    <property type="match status" value="1"/>
</dbReference>
<dbReference type="HAMAP" id="MF_01315">
    <property type="entry name" value="Ribosomal_uS13"/>
    <property type="match status" value="1"/>
</dbReference>
<dbReference type="InterPro" id="IPR027437">
    <property type="entry name" value="Rbsml_uS13_C"/>
</dbReference>
<dbReference type="InterPro" id="IPR001892">
    <property type="entry name" value="Ribosomal_uS13"/>
</dbReference>
<dbReference type="InterPro" id="IPR010979">
    <property type="entry name" value="Ribosomal_uS13-like_H2TH"/>
</dbReference>
<dbReference type="InterPro" id="IPR019980">
    <property type="entry name" value="Ribosomal_uS13_bac-type"/>
</dbReference>
<dbReference type="NCBIfam" id="TIGR03631">
    <property type="entry name" value="uS13_bact"/>
    <property type="match status" value="1"/>
</dbReference>
<dbReference type="PANTHER" id="PTHR10871">
    <property type="entry name" value="30S RIBOSOMAL PROTEIN S13/40S RIBOSOMAL PROTEIN S18"/>
    <property type="match status" value="1"/>
</dbReference>
<dbReference type="PANTHER" id="PTHR10871:SF1">
    <property type="entry name" value="SMALL RIBOSOMAL SUBUNIT PROTEIN US13M"/>
    <property type="match status" value="1"/>
</dbReference>
<dbReference type="Pfam" id="PF00416">
    <property type="entry name" value="Ribosomal_S13"/>
    <property type="match status" value="1"/>
</dbReference>
<dbReference type="PIRSF" id="PIRSF002134">
    <property type="entry name" value="Ribosomal_S13"/>
    <property type="match status" value="1"/>
</dbReference>
<dbReference type="SUPFAM" id="SSF46946">
    <property type="entry name" value="S13-like H2TH domain"/>
    <property type="match status" value="1"/>
</dbReference>
<dbReference type="PROSITE" id="PS50159">
    <property type="entry name" value="RIBOSOMAL_S13_2"/>
    <property type="match status" value="1"/>
</dbReference>
<accession>A9FGC9</accession>
<protein>
    <recommendedName>
        <fullName evidence="1">Small ribosomal subunit protein uS13</fullName>
    </recommendedName>
    <alternativeName>
        <fullName evidence="3">30S ribosomal protein S13</fullName>
    </alternativeName>
</protein>
<gene>
    <name evidence="1" type="primary">rpsM</name>
    <name type="ordered locus">sce7939</name>
</gene>
<comment type="function">
    <text evidence="1">Located at the top of the head of the 30S subunit, it contacts several helices of the 16S rRNA. In the 70S ribosome it contacts the 23S rRNA (bridge B1a) and protein L5 of the 50S subunit (bridge B1b), connecting the 2 subunits; these bridges are implicated in subunit movement. Contacts the tRNAs in the A and P-sites.</text>
</comment>
<comment type="subunit">
    <text evidence="1">Part of the 30S ribosomal subunit. Forms a loose heterodimer with protein S19. Forms two bridges to the 50S subunit in the 70S ribosome.</text>
</comment>
<comment type="similarity">
    <text evidence="1">Belongs to the universal ribosomal protein uS13 family.</text>
</comment>
<feature type="chain" id="PRO_1000086262" description="Small ribosomal subunit protein uS13">
    <location>
        <begin position="1"/>
        <end position="126"/>
    </location>
</feature>
<feature type="region of interest" description="Disordered" evidence="2">
    <location>
        <begin position="92"/>
        <end position="126"/>
    </location>
</feature>
<feature type="compositionally biased region" description="Basic residues" evidence="2">
    <location>
        <begin position="105"/>
        <end position="118"/>
    </location>
</feature>